<accession>Q5JFU9</accession>
<protein>
    <recommendedName>
        <fullName evidence="1">1-(5-phosphoribosyl)-5-[(5-phosphoribosylamino)methylideneamino] imidazole-4-carboxamide isomerase</fullName>
        <ecNumber evidence="1">5.3.1.16</ecNumber>
    </recommendedName>
    <alternativeName>
        <fullName evidence="1">Phosphoribosylformimino-5-aminoimidazole carboxamide ribotide isomerase</fullName>
    </alternativeName>
</protein>
<evidence type="ECO:0000255" key="1">
    <source>
        <dbReference type="HAMAP-Rule" id="MF_01014"/>
    </source>
</evidence>
<gene>
    <name evidence="1" type="primary">hisA</name>
    <name type="ordered locus">TK0247</name>
</gene>
<comment type="catalytic activity">
    <reaction evidence="1">
        <text>1-(5-phospho-beta-D-ribosyl)-5-[(5-phospho-beta-D-ribosylamino)methylideneamino]imidazole-4-carboxamide = 5-[(5-phospho-1-deoxy-D-ribulos-1-ylimino)methylamino]-1-(5-phospho-beta-D-ribosyl)imidazole-4-carboxamide</text>
        <dbReference type="Rhea" id="RHEA:15469"/>
        <dbReference type="ChEBI" id="CHEBI:58435"/>
        <dbReference type="ChEBI" id="CHEBI:58525"/>
        <dbReference type="EC" id="5.3.1.16"/>
    </reaction>
</comment>
<comment type="pathway">
    <text evidence="1">Amino-acid biosynthesis; L-histidine biosynthesis; L-histidine from 5-phospho-alpha-D-ribose 1-diphosphate: step 4/9.</text>
</comment>
<comment type="subcellular location">
    <subcellularLocation>
        <location evidence="1">Cytoplasm</location>
    </subcellularLocation>
</comment>
<comment type="similarity">
    <text evidence="1">Belongs to the HisA/HisF family.</text>
</comment>
<keyword id="KW-0028">Amino-acid biosynthesis</keyword>
<keyword id="KW-0963">Cytoplasm</keyword>
<keyword id="KW-0368">Histidine biosynthesis</keyword>
<keyword id="KW-0413">Isomerase</keyword>
<keyword id="KW-1185">Reference proteome</keyword>
<feature type="chain" id="PRO_0000142102" description="1-(5-phosphoribosyl)-5-[(5-phosphoribosylamino)methylideneamino] imidazole-4-carboxamide isomerase">
    <location>
        <begin position="1"/>
        <end position="233"/>
    </location>
</feature>
<feature type="active site" description="Proton acceptor" evidence="1">
    <location>
        <position position="8"/>
    </location>
</feature>
<feature type="active site" description="Proton donor" evidence="1">
    <location>
        <position position="125"/>
    </location>
</feature>
<name>HIS4_THEKO</name>
<proteinExistence type="inferred from homology"/>
<dbReference type="EC" id="5.3.1.16" evidence="1"/>
<dbReference type="EMBL" id="AP006878">
    <property type="protein sequence ID" value="BAD84436.1"/>
    <property type="molecule type" value="Genomic_DNA"/>
</dbReference>
<dbReference type="RefSeq" id="WP_011249202.1">
    <property type="nucleotide sequence ID" value="NC_006624.1"/>
</dbReference>
<dbReference type="SMR" id="Q5JFU9"/>
<dbReference type="FunCoup" id="Q5JFU9">
    <property type="interactions" value="103"/>
</dbReference>
<dbReference type="STRING" id="69014.TK0247"/>
<dbReference type="EnsemblBacteria" id="BAD84436">
    <property type="protein sequence ID" value="BAD84436"/>
    <property type="gene ID" value="TK0247"/>
</dbReference>
<dbReference type="GeneID" id="78446751"/>
<dbReference type="KEGG" id="tko:TK0247"/>
<dbReference type="PATRIC" id="fig|69014.16.peg.246"/>
<dbReference type="eggNOG" id="arCOG00618">
    <property type="taxonomic scope" value="Archaea"/>
</dbReference>
<dbReference type="HOGENOM" id="CLU_048577_1_2_2"/>
<dbReference type="InParanoid" id="Q5JFU9"/>
<dbReference type="OrthoDB" id="52866at2157"/>
<dbReference type="PhylomeDB" id="Q5JFU9"/>
<dbReference type="UniPathway" id="UPA00031">
    <property type="reaction ID" value="UER00009"/>
</dbReference>
<dbReference type="Proteomes" id="UP000000536">
    <property type="component" value="Chromosome"/>
</dbReference>
<dbReference type="GO" id="GO:0005737">
    <property type="term" value="C:cytoplasm"/>
    <property type="evidence" value="ECO:0000318"/>
    <property type="project" value="GO_Central"/>
</dbReference>
<dbReference type="GO" id="GO:0003949">
    <property type="term" value="F:1-(5-phosphoribosyl)-5-[(5-phosphoribosylamino)methylideneamino]imidazole-4-carboxamide isomerase activity"/>
    <property type="evidence" value="ECO:0000318"/>
    <property type="project" value="GO_Central"/>
</dbReference>
<dbReference type="GO" id="GO:0000105">
    <property type="term" value="P:L-histidine biosynthetic process"/>
    <property type="evidence" value="ECO:0000318"/>
    <property type="project" value="GO_Central"/>
</dbReference>
<dbReference type="CDD" id="cd04732">
    <property type="entry name" value="HisA"/>
    <property type="match status" value="1"/>
</dbReference>
<dbReference type="FunFam" id="3.20.20.70:FF:000009">
    <property type="entry name" value="1-(5-phosphoribosyl)-5-[(5-phosphoribosylamino)methylideneamino] imidazole-4-carboxamide isomerase"/>
    <property type="match status" value="1"/>
</dbReference>
<dbReference type="Gene3D" id="3.20.20.70">
    <property type="entry name" value="Aldolase class I"/>
    <property type="match status" value="1"/>
</dbReference>
<dbReference type="HAMAP" id="MF_01014">
    <property type="entry name" value="HisA"/>
    <property type="match status" value="1"/>
</dbReference>
<dbReference type="InterPro" id="IPR013785">
    <property type="entry name" value="Aldolase_TIM"/>
</dbReference>
<dbReference type="InterPro" id="IPR006062">
    <property type="entry name" value="His_biosynth"/>
</dbReference>
<dbReference type="InterPro" id="IPR044524">
    <property type="entry name" value="Isoase_HisA-like"/>
</dbReference>
<dbReference type="InterPro" id="IPR023016">
    <property type="entry name" value="Isoase_HisA-like_bact"/>
</dbReference>
<dbReference type="InterPro" id="IPR011060">
    <property type="entry name" value="RibuloseP-bd_barrel"/>
</dbReference>
<dbReference type="NCBIfam" id="NF003156">
    <property type="entry name" value="PRK04128.1"/>
    <property type="match status" value="1"/>
</dbReference>
<dbReference type="PANTHER" id="PTHR43090">
    <property type="entry name" value="1-(5-PHOSPHORIBOSYL)-5-[(5-PHOSPHORIBOSYLAMINO)METHYLIDENEAMINO] IMIDAZOLE-4-CARBOXAMIDE ISOMERASE"/>
    <property type="match status" value="1"/>
</dbReference>
<dbReference type="PANTHER" id="PTHR43090:SF7">
    <property type="entry name" value="1-(5-PHOSPHORIBOSYL)-5-[(5-PHOSPHORIBOSYLAMINO)METHYLIDENEAMINO] IMIDAZOLE-4-CARBOXAMIDE ISOMERASE"/>
    <property type="match status" value="1"/>
</dbReference>
<dbReference type="Pfam" id="PF00977">
    <property type="entry name" value="His_biosynth"/>
    <property type="match status" value="1"/>
</dbReference>
<dbReference type="SUPFAM" id="SSF51366">
    <property type="entry name" value="Ribulose-phoshate binding barrel"/>
    <property type="match status" value="1"/>
</dbReference>
<reference key="1">
    <citation type="journal article" date="2005" name="Genome Res.">
        <title>Complete genome sequence of the hyperthermophilic archaeon Thermococcus kodakaraensis KOD1 and comparison with Pyrococcus genomes.</title>
        <authorList>
            <person name="Fukui T."/>
            <person name="Atomi H."/>
            <person name="Kanai T."/>
            <person name="Matsumi R."/>
            <person name="Fujiwara S."/>
            <person name="Imanaka T."/>
        </authorList>
    </citation>
    <scope>NUCLEOTIDE SEQUENCE [LARGE SCALE GENOMIC DNA]</scope>
    <source>
        <strain>ATCC BAA-918 / JCM 12380 / KOD1</strain>
    </source>
</reference>
<sequence>MEVYPAIDLMKGRAVRLYRGRRESVKVYGDPVKIAQGFSELVDKIHVVDLDGAFEGRPRNLEVVERIIEETGLRVQVGGGFRTYEAVGRAYEVGVENVILGTKALDTAFLERLTDEFGGITVSLDVKDGRIAVKGWVEEGSIKVRDAFEILRNYVNRFVYTSIERDGTLTGVDEIGRFWGDEEFIYAGGVSSAEDIVRLAERGFSGVIVGKALYEGVVKLEDLLEVAKCLRRG</sequence>
<organism>
    <name type="scientific">Thermococcus kodakarensis (strain ATCC BAA-918 / JCM 12380 / KOD1)</name>
    <name type="common">Pyrococcus kodakaraensis (strain KOD1)</name>
    <dbReference type="NCBI Taxonomy" id="69014"/>
    <lineage>
        <taxon>Archaea</taxon>
        <taxon>Methanobacteriati</taxon>
        <taxon>Methanobacteriota</taxon>
        <taxon>Thermococci</taxon>
        <taxon>Thermococcales</taxon>
        <taxon>Thermococcaceae</taxon>
        <taxon>Thermococcus</taxon>
    </lineage>
</organism>